<reference key="1">
    <citation type="submission" date="2008-02" db="EMBL/GenBank/DDBJ databases">
        <title>Complete sequence of chromosome 1 of Burkholderia cenocepacia MC0-3.</title>
        <authorList>
            <person name="Copeland A."/>
            <person name="Lucas S."/>
            <person name="Lapidus A."/>
            <person name="Barry K."/>
            <person name="Bruce D."/>
            <person name="Goodwin L."/>
            <person name="Glavina del Rio T."/>
            <person name="Dalin E."/>
            <person name="Tice H."/>
            <person name="Pitluck S."/>
            <person name="Chain P."/>
            <person name="Malfatti S."/>
            <person name="Shin M."/>
            <person name="Vergez L."/>
            <person name="Schmutz J."/>
            <person name="Larimer F."/>
            <person name="Land M."/>
            <person name="Hauser L."/>
            <person name="Kyrpides N."/>
            <person name="Mikhailova N."/>
            <person name="Tiedje J."/>
            <person name="Richardson P."/>
        </authorList>
    </citation>
    <scope>NUCLEOTIDE SEQUENCE [LARGE SCALE GENOMIC DNA]</scope>
    <source>
        <strain>MC0-3</strain>
    </source>
</reference>
<keyword id="KW-0030">Aminoacyl-tRNA synthetase</keyword>
<keyword id="KW-0067">ATP-binding</keyword>
<keyword id="KW-0963">Cytoplasm</keyword>
<keyword id="KW-0436">Ligase</keyword>
<keyword id="KW-0479">Metal-binding</keyword>
<keyword id="KW-0547">Nucleotide-binding</keyword>
<keyword id="KW-0648">Protein biosynthesis</keyword>
<keyword id="KW-0862">Zinc</keyword>
<proteinExistence type="inferred from homology"/>
<organism>
    <name type="scientific">Burkholderia orbicola (strain MC0-3)</name>
    <dbReference type="NCBI Taxonomy" id="406425"/>
    <lineage>
        <taxon>Bacteria</taxon>
        <taxon>Pseudomonadati</taxon>
        <taxon>Pseudomonadota</taxon>
        <taxon>Betaproteobacteria</taxon>
        <taxon>Burkholderiales</taxon>
        <taxon>Burkholderiaceae</taxon>
        <taxon>Burkholderia</taxon>
        <taxon>Burkholderia cepacia complex</taxon>
        <taxon>Burkholderia orbicola</taxon>
    </lineage>
</organism>
<protein>
    <recommendedName>
        <fullName evidence="1">Isoleucine--tRNA ligase</fullName>
        <ecNumber evidence="1">6.1.1.5</ecNumber>
    </recommendedName>
    <alternativeName>
        <fullName evidence="1">Isoleucyl-tRNA synthetase</fullName>
        <shortName evidence="1">IleRS</shortName>
    </alternativeName>
</protein>
<evidence type="ECO:0000255" key="1">
    <source>
        <dbReference type="HAMAP-Rule" id="MF_02002"/>
    </source>
</evidence>
<gene>
    <name evidence="1" type="primary">ileS</name>
    <name type="ordered locus">Bcenmc03_2537</name>
</gene>
<sequence>MSNKKADSKPQAKYPVNLLDTPFPMRGDLPKREPQWVKEWEERGIYEKIRAASKGRPKFILHDGPPYANGDIHLGHAVNKILKDIVVKSRNMAGFDAPYVPGWDCHGMPIEIQIEKQFGKSLPAAEVMSKARAYATEQIEKQKVGFKRLGVLGDWANPYKTMNFVNEAEEIRALGKIIEKGYVYRGLKPVNWCFDCGSALAEAEVEYKDRTDPTIDVMFAFAEPEKTAHAFGLPALPRAEGGIVIWTTTPWTIPANQALNLHPEIIYALVDTERGLLIIAQERVEACMADFKLTGRVVATAPGVKLANLRFHHPLASAHPGYKRTAPVYLGDYVTTDTGTGVVHSSPAYGIEDFMSCKAHGMTDSDIINPVMGDGRYIESLPLFGGLSIWDANPKVVDALNAAGSLLRSEKYTHSYMHCWRHKTPIIYRATSQWFAGMDVTPQDGGKTLRETALEGIDATAFYPSWGKQRLFSMIANRPDWTLSRQRQWGVPMAFFVHKETGELHPRTLELLEEVAKRVEQSGIEAWQSLDPRELIGDDANLYEKNRDTLDVWFDSGTTHWHVLRGSHKDQLQFPADLYLEGSDQHRGWFHSSLLTASMIDGRAPYKGLLTHGFTVDGEGRKMSKSLGNGIDPHEVANRLGAEIIRLWIASTDYSGELAISEEILKRVTEGYRRIRNTLRFLLANLSDFDFAQHAVPVDEWLEIDRYAVAFSQQLQTELLGHYEKYEFHPVVAKLQTYCSEDLGGFYLDVLKDRLYTSAADSRARRSAQTALYHLTHGLLRVLAPFLSFTAEEAWKVFQPASDTIFTETYYAYPEVAGSAALIEKWALLRDVRGNVTKALEEARTANRIGSSLQAEVAVHASGARYDALTSLGDDLKFVLITSAATVVKVDDEAQESVDVAASKYQKCERCWHYREDVGAHADHPTLCGRCFSNLFENGEIRSAA</sequence>
<dbReference type="EC" id="6.1.1.5" evidence="1"/>
<dbReference type="EMBL" id="CP000958">
    <property type="protein sequence ID" value="ACA91698.1"/>
    <property type="molecule type" value="Genomic_DNA"/>
</dbReference>
<dbReference type="RefSeq" id="WP_012329070.1">
    <property type="nucleotide sequence ID" value="NC_010508.1"/>
</dbReference>
<dbReference type="SMR" id="B1JXC3"/>
<dbReference type="GeneID" id="83049326"/>
<dbReference type="KEGG" id="bcm:Bcenmc03_2537"/>
<dbReference type="HOGENOM" id="CLU_001493_7_1_4"/>
<dbReference type="Proteomes" id="UP000002169">
    <property type="component" value="Chromosome 1"/>
</dbReference>
<dbReference type="GO" id="GO:0005829">
    <property type="term" value="C:cytosol"/>
    <property type="evidence" value="ECO:0007669"/>
    <property type="project" value="TreeGrafter"/>
</dbReference>
<dbReference type="GO" id="GO:0002161">
    <property type="term" value="F:aminoacyl-tRNA deacylase activity"/>
    <property type="evidence" value="ECO:0007669"/>
    <property type="project" value="InterPro"/>
</dbReference>
<dbReference type="GO" id="GO:0005524">
    <property type="term" value="F:ATP binding"/>
    <property type="evidence" value="ECO:0007669"/>
    <property type="project" value="UniProtKB-UniRule"/>
</dbReference>
<dbReference type="GO" id="GO:0004822">
    <property type="term" value="F:isoleucine-tRNA ligase activity"/>
    <property type="evidence" value="ECO:0007669"/>
    <property type="project" value="UniProtKB-UniRule"/>
</dbReference>
<dbReference type="GO" id="GO:0000049">
    <property type="term" value="F:tRNA binding"/>
    <property type="evidence" value="ECO:0007669"/>
    <property type="project" value="InterPro"/>
</dbReference>
<dbReference type="GO" id="GO:0008270">
    <property type="term" value="F:zinc ion binding"/>
    <property type="evidence" value="ECO:0007669"/>
    <property type="project" value="UniProtKB-UniRule"/>
</dbReference>
<dbReference type="GO" id="GO:0006428">
    <property type="term" value="P:isoleucyl-tRNA aminoacylation"/>
    <property type="evidence" value="ECO:0007669"/>
    <property type="project" value="UniProtKB-UniRule"/>
</dbReference>
<dbReference type="CDD" id="cd07960">
    <property type="entry name" value="Anticodon_Ia_Ile_BEm"/>
    <property type="match status" value="1"/>
</dbReference>
<dbReference type="CDD" id="cd00818">
    <property type="entry name" value="IleRS_core"/>
    <property type="match status" value="1"/>
</dbReference>
<dbReference type="FunFam" id="1.10.730.20:FF:000001">
    <property type="entry name" value="Isoleucine--tRNA ligase"/>
    <property type="match status" value="1"/>
</dbReference>
<dbReference type="FunFam" id="3.40.50.620:FF:000042">
    <property type="entry name" value="Isoleucine--tRNA ligase"/>
    <property type="match status" value="1"/>
</dbReference>
<dbReference type="FunFam" id="3.40.50.620:FF:000048">
    <property type="entry name" value="Isoleucine--tRNA ligase"/>
    <property type="match status" value="1"/>
</dbReference>
<dbReference type="Gene3D" id="1.10.730.20">
    <property type="match status" value="1"/>
</dbReference>
<dbReference type="Gene3D" id="3.40.50.620">
    <property type="entry name" value="HUPs"/>
    <property type="match status" value="2"/>
</dbReference>
<dbReference type="Gene3D" id="3.90.740.10">
    <property type="entry name" value="Valyl/Leucyl/Isoleucyl-tRNA synthetase, editing domain"/>
    <property type="match status" value="1"/>
</dbReference>
<dbReference type="HAMAP" id="MF_02002">
    <property type="entry name" value="Ile_tRNA_synth_type1"/>
    <property type="match status" value="1"/>
</dbReference>
<dbReference type="InterPro" id="IPR001412">
    <property type="entry name" value="aa-tRNA-synth_I_CS"/>
</dbReference>
<dbReference type="InterPro" id="IPR002300">
    <property type="entry name" value="aa-tRNA-synth_Ia"/>
</dbReference>
<dbReference type="InterPro" id="IPR033708">
    <property type="entry name" value="Anticodon_Ile_BEm"/>
</dbReference>
<dbReference type="InterPro" id="IPR002301">
    <property type="entry name" value="Ile-tRNA-ligase"/>
</dbReference>
<dbReference type="InterPro" id="IPR023585">
    <property type="entry name" value="Ile-tRNA-ligase_type1"/>
</dbReference>
<dbReference type="InterPro" id="IPR050081">
    <property type="entry name" value="Ile-tRNA_ligase"/>
</dbReference>
<dbReference type="InterPro" id="IPR013155">
    <property type="entry name" value="M/V/L/I-tRNA-synth_anticd-bd"/>
</dbReference>
<dbReference type="InterPro" id="IPR014729">
    <property type="entry name" value="Rossmann-like_a/b/a_fold"/>
</dbReference>
<dbReference type="InterPro" id="IPR009080">
    <property type="entry name" value="tRNAsynth_Ia_anticodon-bd"/>
</dbReference>
<dbReference type="InterPro" id="IPR009008">
    <property type="entry name" value="Val/Leu/Ile-tRNA-synth_edit"/>
</dbReference>
<dbReference type="InterPro" id="IPR010663">
    <property type="entry name" value="Znf_FPG/IleRS"/>
</dbReference>
<dbReference type="NCBIfam" id="TIGR00392">
    <property type="entry name" value="ileS"/>
    <property type="match status" value="1"/>
</dbReference>
<dbReference type="PANTHER" id="PTHR42765:SF1">
    <property type="entry name" value="ISOLEUCINE--TRNA LIGASE, MITOCHONDRIAL"/>
    <property type="match status" value="1"/>
</dbReference>
<dbReference type="PANTHER" id="PTHR42765">
    <property type="entry name" value="SOLEUCYL-TRNA SYNTHETASE"/>
    <property type="match status" value="1"/>
</dbReference>
<dbReference type="Pfam" id="PF08264">
    <property type="entry name" value="Anticodon_1"/>
    <property type="match status" value="1"/>
</dbReference>
<dbReference type="Pfam" id="PF00133">
    <property type="entry name" value="tRNA-synt_1"/>
    <property type="match status" value="1"/>
</dbReference>
<dbReference type="Pfam" id="PF06827">
    <property type="entry name" value="zf-FPG_IleRS"/>
    <property type="match status" value="1"/>
</dbReference>
<dbReference type="PRINTS" id="PR00984">
    <property type="entry name" value="TRNASYNTHILE"/>
</dbReference>
<dbReference type="SUPFAM" id="SSF47323">
    <property type="entry name" value="Anticodon-binding domain of a subclass of class I aminoacyl-tRNA synthetases"/>
    <property type="match status" value="1"/>
</dbReference>
<dbReference type="SUPFAM" id="SSF52374">
    <property type="entry name" value="Nucleotidylyl transferase"/>
    <property type="match status" value="1"/>
</dbReference>
<dbReference type="SUPFAM" id="SSF50677">
    <property type="entry name" value="ValRS/IleRS/LeuRS editing domain"/>
    <property type="match status" value="1"/>
</dbReference>
<dbReference type="PROSITE" id="PS00178">
    <property type="entry name" value="AA_TRNA_LIGASE_I"/>
    <property type="match status" value="1"/>
</dbReference>
<comment type="function">
    <text evidence="1">Catalyzes the attachment of isoleucine to tRNA(Ile). As IleRS can inadvertently accommodate and process structurally similar amino acids such as valine, to avoid such errors it has two additional distinct tRNA(Ile)-dependent editing activities. One activity is designated as 'pretransfer' editing and involves the hydrolysis of activated Val-AMP. The other activity is designated 'posttransfer' editing and involves deacylation of mischarged Val-tRNA(Ile).</text>
</comment>
<comment type="catalytic activity">
    <reaction evidence="1">
        <text>tRNA(Ile) + L-isoleucine + ATP = L-isoleucyl-tRNA(Ile) + AMP + diphosphate</text>
        <dbReference type="Rhea" id="RHEA:11060"/>
        <dbReference type="Rhea" id="RHEA-COMP:9666"/>
        <dbReference type="Rhea" id="RHEA-COMP:9695"/>
        <dbReference type="ChEBI" id="CHEBI:30616"/>
        <dbReference type="ChEBI" id="CHEBI:33019"/>
        <dbReference type="ChEBI" id="CHEBI:58045"/>
        <dbReference type="ChEBI" id="CHEBI:78442"/>
        <dbReference type="ChEBI" id="CHEBI:78528"/>
        <dbReference type="ChEBI" id="CHEBI:456215"/>
        <dbReference type="EC" id="6.1.1.5"/>
    </reaction>
</comment>
<comment type="cofactor">
    <cofactor evidence="1">
        <name>Zn(2+)</name>
        <dbReference type="ChEBI" id="CHEBI:29105"/>
    </cofactor>
    <text evidence="1">Binds 1 zinc ion per subunit.</text>
</comment>
<comment type="subunit">
    <text evidence="1">Monomer.</text>
</comment>
<comment type="subcellular location">
    <subcellularLocation>
        <location evidence="1">Cytoplasm</location>
    </subcellularLocation>
</comment>
<comment type="domain">
    <text evidence="1">IleRS has two distinct active sites: one for aminoacylation and one for editing. The misactivated valine is translocated from the active site to the editing site, which sterically excludes the correctly activated isoleucine. The single editing site contains two valyl binding pockets, one specific for each substrate (Val-AMP or Val-tRNA(Ile)).</text>
</comment>
<comment type="similarity">
    <text evidence="1">Belongs to the class-I aminoacyl-tRNA synthetase family. IleS type 1 subfamily.</text>
</comment>
<accession>B1JXC3</accession>
<name>SYI_BURO0</name>
<feature type="chain" id="PRO_1000189136" description="Isoleucine--tRNA ligase">
    <location>
        <begin position="1"/>
        <end position="945"/>
    </location>
</feature>
<feature type="short sequence motif" description="'HIGH' region">
    <location>
        <begin position="66"/>
        <end position="76"/>
    </location>
</feature>
<feature type="short sequence motif" description="'KMSKS' region">
    <location>
        <begin position="622"/>
        <end position="626"/>
    </location>
</feature>
<feature type="binding site" evidence="1">
    <location>
        <position position="581"/>
    </location>
    <ligand>
        <name>L-isoleucyl-5'-AMP</name>
        <dbReference type="ChEBI" id="CHEBI:178002"/>
    </ligand>
</feature>
<feature type="binding site" evidence="1">
    <location>
        <position position="625"/>
    </location>
    <ligand>
        <name>ATP</name>
        <dbReference type="ChEBI" id="CHEBI:30616"/>
    </ligand>
</feature>
<feature type="binding site" evidence="1">
    <location>
        <position position="908"/>
    </location>
    <ligand>
        <name>Zn(2+)</name>
        <dbReference type="ChEBI" id="CHEBI:29105"/>
    </ligand>
</feature>
<feature type="binding site" evidence="1">
    <location>
        <position position="911"/>
    </location>
    <ligand>
        <name>Zn(2+)</name>
        <dbReference type="ChEBI" id="CHEBI:29105"/>
    </ligand>
</feature>
<feature type="binding site" evidence="1">
    <location>
        <position position="928"/>
    </location>
    <ligand>
        <name>Zn(2+)</name>
        <dbReference type="ChEBI" id="CHEBI:29105"/>
    </ligand>
</feature>
<feature type="binding site" evidence="1">
    <location>
        <position position="931"/>
    </location>
    <ligand>
        <name>Zn(2+)</name>
        <dbReference type="ChEBI" id="CHEBI:29105"/>
    </ligand>
</feature>